<feature type="chain" id="PRO_0000329450" description="Eukaryotic translation initiation factor 3 subunit M">
    <location>
        <begin position="1"/>
        <end position="401"/>
    </location>
</feature>
<feature type="domain" description="PCI" evidence="2">
    <location>
        <begin position="188"/>
        <end position="356"/>
    </location>
</feature>
<dbReference type="EMBL" id="AAFI02000095">
    <property type="protein sequence ID" value="EAL63929.1"/>
    <property type="molecule type" value="Genomic_DNA"/>
</dbReference>
<dbReference type="RefSeq" id="XP_637434.1">
    <property type="nucleotide sequence ID" value="XM_632342.1"/>
</dbReference>
<dbReference type="SMR" id="Q54KZ8"/>
<dbReference type="FunCoup" id="Q54KZ8">
    <property type="interactions" value="927"/>
</dbReference>
<dbReference type="STRING" id="44689.Q54KZ8"/>
<dbReference type="PaxDb" id="44689-DDB0238518"/>
<dbReference type="EnsemblProtists" id="EAL63929">
    <property type="protein sequence ID" value="EAL63929"/>
    <property type="gene ID" value="DDB_G0287005"/>
</dbReference>
<dbReference type="GeneID" id="8625903"/>
<dbReference type="KEGG" id="ddi:DDB_G0287005"/>
<dbReference type="dictyBase" id="DDB_G0287005"/>
<dbReference type="VEuPathDB" id="AmoebaDB:DDB_G0287005"/>
<dbReference type="eggNOG" id="KOG2753">
    <property type="taxonomic scope" value="Eukaryota"/>
</dbReference>
<dbReference type="HOGENOM" id="CLU_035254_0_1_1"/>
<dbReference type="InParanoid" id="Q54KZ8"/>
<dbReference type="OMA" id="VCLKALW"/>
<dbReference type="PhylomeDB" id="Q54KZ8"/>
<dbReference type="Reactome" id="R-DDI-156827">
    <property type="pathway name" value="L13a-mediated translational silencing of Ceruloplasmin expression"/>
</dbReference>
<dbReference type="Reactome" id="R-DDI-72689">
    <property type="pathway name" value="Formation of a pool of free 40S subunits"/>
</dbReference>
<dbReference type="Reactome" id="R-DDI-72695">
    <property type="pathway name" value="Formation of the ternary complex, and subsequently, the 43S complex"/>
</dbReference>
<dbReference type="Reactome" id="R-DDI-72702">
    <property type="pathway name" value="Ribosomal scanning and start codon recognition"/>
</dbReference>
<dbReference type="PRO" id="PR:Q54KZ8"/>
<dbReference type="Proteomes" id="UP000002195">
    <property type="component" value="Chromosome 4"/>
</dbReference>
<dbReference type="GO" id="GO:0016282">
    <property type="term" value="C:eukaryotic 43S preinitiation complex"/>
    <property type="evidence" value="ECO:0007669"/>
    <property type="project" value="UniProtKB-UniRule"/>
</dbReference>
<dbReference type="GO" id="GO:0033290">
    <property type="term" value="C:eukaryotic 48S preinitiation complex"/>
    <property type="evidence" value="ECO:0007669"/>
    <property type="project" value="UniProtKB-UniRule"/>
</dbReference>
<dbReference type="GO" id="GO:0005852">
    <property type="term" value="C:eukaryotic translation initiation factor 3 complex"/>
    <property type="evidence" value="ECO:0000318"/>
    <property type="project" value="GO_Central"/>
</dbReference>
<dbReference type="GO" id="GO:0071541">
    <property type="term" value="C:eukaryotic translation initiation factor 3 complex, eIF3m"/>
    <property type="evidence" value="ECO:0007669"/>
    <property type="project" value="UniProtKB-UniRule"/>
</dbReference>
<dbReference type="GO" id="GO:0003743">
    <property type="term" value="F:translation initiation factor activity"/>
    <property type="evidence" value="ECO:0007669"/>
    <property type="project" value="UniProtKB-UniRule"/>
</dbReference>
<dbReference type="GO" id="GO:0002183">
    <property type="term" value="P:cytoplasmic translational initiation"/>
    <property type="evidence" value="ECO:0000318"/>
    <property type="project" value="GO_Central"/>
</dbReference>
<dbReference type="GO" id="GO:0001732">
    <property type="term" value="P:formation of cytoplasmic translation initiation complex"/>
    <property type="evidence" value="ECO:0007669"/>
    <property type="project" value="UniProtKB-UniRule"/>
</dbReference>
<dbReference type="HAMAP" id="MF_03012">
    <property type="entry name" value="eIF3m"/>
    <property type="match status" value="1"/>
</dbReference>
<dbReference type="InterPro" id="IPR045237">
    <property type="entry name" value="COPS7/eIF3m"/>
</dbReference>
<dbReference type="InterPro" id="IPR027528">
    <property type="entry name" value="eIF3m"/>
</dbReference>
<dbReference type="InterPro" id="IPR040750">
    <property type="entry name" value="eIF3m_C_helix"/>
</dbReference>
<dbReference type="InterPro" id="IPR000717">
    <property type="entry name" value="PCI_dom"/>
</dbReference>
<dbReference type="InterPro" id="IPR036390">
    <property type="entry name" value="WH_DNA-bd_sf"/>
</dbReference>
<dbReference type="PANTHER" id="PTHR15350">
    <property type="entry name" value="COP9 SIGNALOSOME COMPLEX SUBUNIT 7/DENDRITIC CELL PROTEIN GA17"/>
    <property type="match status" value="1"/>
</dbReference>
<dbReference type="PANTHER" id="PTHR15350:SF2">
    <property type="entry name" value="EUKARYOTIC TRANSLATION INITIATION FACTOR 3 SUBUNIT M"/>
    <property type="match status" value="1"/>
</dbReference>
<dbReference type="Pfam" id="PF18005">
    <property type="entry name" value="eIF3m_C_helix"/>
    <property type="match status" value="1"/>
</dbReference>
<dbReference type="Pfam" id="PF01399">
    <property type="entry name" value="PCI"/>
    <property type="match status" value="1"/>
</dbReference>
<dbReference type="SMART" id="SM00088">
    <property type="entry name" value="PINT"/>
    <property type="match status" value="1"/>
</dbReference>
<dbReference type="SUPFAM" id="SSF46785">
    <property type="entry name" value="Winged helix' DNA-binding domain"/>
    <property type="match status" value="1"/>
</dbReference>
<dbReference type="PROSITE" id="PS50250">
    <property type="entry name" value="PCI"/>
    <property type="match status" value="1"/>
</dbReference>
<comment type="function">
    <text evidence="1">Component of the eukaryotic translation initiation factor 3 (eIF-3) complex, which is involved in protein synthesis of a specialized repertoire of mRNAs and, together with other initiation factors, stimulates binding of mRNA and methionyl-tRNAi to the 40S ribosome. The eIF-3 complex specifically targets and initiates translation of a subset of mRNAs involved in cell proliferation.</text>
</comment>
<comment type="subunit">
    <text evidence="1">Component of the eukaryotic translation initiation factor 3 (eIF-3) complex.</text>
</comment>
<comment type="subcellular location">
    <subcellularLocation>
        <location evidence="1">Cytoplasm</location>
    </subcellularLocation>
</comment>
<comment type="similarity">
    <text evidence="1">Belongs to the eIF-3 subunit M family.</text>
</comment>
<gene>
    <name type="primary">eif3m</name>
    <name type="ORF">DDB_G0287005</name>
</gene>
<reference key="1">
    <citation type="journal article" date="2005" name="Nature">
        <title>The genome of the social amoeba Dictyostelium discoideum.</title>
        <authorList>
            <person name="Eichinger L."/>
            <person name="Pachebat J.A."/>
            <person name="Gloeckner G."/>
            <person name="Rajandream M.A."/>
            <person name="Sucgang R."/>
            <person name="Berriman M."/>
            <person name="Song J."/>
            <person name="Olsen R."/>
            <person name="Szafranski K."/>
            <person name="Xu Q."/>
            <person name="Tunggal B."/>
            <person name="Kummerfeld S."/>
            <person name="Madera M."/>
            <person name="Konfortov B.A."/>
            <person name="Rivero F."/>
            <person name="Bankier A.T."/>
            <person name="Lehmann R."/>
            <person name="Hamlin N."/>
            <person name="Davies R."/>
            <person name="Gaudet P."/>
            <person name="Fey P."/>
            <person name="Pilcher K."/>
            <person name="Chen G."/>
            <person name="Saunders D."/>
            <person name="Sodergren E.J."/>
            <person name="Davis P."/>
            <person name="Kerhornou A."/>
            <person name="Nie X."/>
            <person name="Hall N."/>
            <person name="Anjard C."/>
            <person name="Hemphill L."/>
            <person name="Bason N."/>
            <person name="Farbrother P."/>
            <person name="Desany B."/>
            <person name="Just E."/>
            <person name="Morio T."/>
            <person name="Rost R."/>
            <person name="Churcher C.M."/>
            <person name="Cooper J."/>
            <person name="Haydock S."/>
            <person name="van Driessche N."/>
            <person name="Cronin A."/>
            <person name="Goodhead I."/>
            <person name="Muzny D.M."/>
            <person name="Mourier T."/>
            <person name="Pain A."/>
            <person name="Lu M."/>
            <person name="Harper D."/>
            <person name="Lindsay R."/>
            <person name="Hauser H."/>
            <person name="James K.D."/>
            <person name="Quiles M."/>
            <person name="Madan Babu M."/>
            <person name="Saito T."/>
            <person name="Buchrieser C."/>
            <person name="Wardroper A."/>
            <person name="Felder M."/>
            <person name="Thangavelu M."/>
            <person name="Johnson D."/>
            <person name="Knights A."/>
            <person name="Loulseged H."/>
            <person name="Mungall K.L."/>
            <person name="Oliver K."/>
            <person name="Price C."/>
            <person name="Quail M.A."/>
            <person name="Urushihara H."/>
            <person name="Hernandez J."/>
            <person name="Rabbinowitsch E."/>
            <person name="Steffen D."/>
            <person name="Sanders M."/>
            <person name="Ma J."/>
            <person name="Kohara Y."/>
            <person name="Sharp S."/>
            <person name="Simmonds M.N."/>
            <person name="Spiegler S."/>
            <person name="Tivey A."/>
            <person name="Sugano S."/>
            <person name="White B."/>
            <person name="Walker D."/>
            <person name="Woodward J.R."/>
            <person name="Winckler T."/>
            <person name="Tanaka Y."/>
            <person name="Shaulsky G."/>
            <person name="Schleicher M."/>
            <person name="Weinstock G.M."/>
            <person name="Rosenthal A."/>
            <person name="Cox E.C."/>
            <person name="Chisholm R.L."/>
            <person name="Gibbs R.A."/>
            <person name="Loomis W.F."/>
            <person name="Platzer M."/>
            <person name="Kay R.R."/>
            <person name="Williams J.G."/>
            <person name="Dear P.H."/>
            <person name="Noegel A.A."/>
            <person name="Barrell B.G."/>
            <person name="Kuspa A."/>
        </authorList>
    </citation>
    <scope>NUCLEOTIDE SEQUENCE [LARGE SCALE GENOMIC DNA]</scope>
    <source>
        <strain>AX4</strain>
    </source>
</reference>
<reference key="2">
    <citation type="submission" date="2009-07" db="UniProtKB">
        <authorList>
            <person name="Bienvenut W.V."/>
            <person name="Ura S."/>
            <person name="Insall R.H."/>
        </authorList>
    </citation>
    <scope>PROTEIN SEQUENCE OF 117-128 AND 380-401</scope>
    <scope>IDENTIFICATION BY MASS SPECTROMETRY</scope>
    <source>
        <strain>AX2</strain>
    </source>
</reference>
<organism>
    <name type="scientific">Dictyostelium discoideum</name>
    <name type="common">Social amoeba</name>
    <dbReference type="NCBI Taxonomy" id="44689"/>
    <lineage>
        <taxon>Eukaryota</taxon>
        <taxon>Amoebozoa</taxon>
        <taxon>Evosea</taxon>
        <taxon>Eumycetozoa</taxon>
        <taxon>Dictyostelia</taxon>
        <taxon>Dictyosteliales</taxon>
        <taxon>Dictyosteliaceae</taxon>
        <taxon>Dictyostelium</taxon>
    </lineage>
</organism>
<protein>
    <recommendedName>
        <fullName evidence="1">Eukaryotic translation initiation factor 3 subunit M</fullName>
        <shortName evidence="1">eIF3m</shortName>
    </recommendedName>
</protein>
<sequence length="401" mass="46635">MTIFIDLASLEDLYNDLISHIETLRKKKGSEYSVADYQILIGEQRTVEFLSKIVSNETEFLFKECKDSDKDIEGFFNVILTILHKLENEDEINIVSQKIRDSLSAHPTENSQLKIKILTNLFNSFQPKSTQRYDIFFALVKLASDSNNLEFVKYQITDIDSWLEDWNVSIQQKRKLYKLISNIFKEKQRMLSHQFLVKYLQTFTKEDSQEAQEDAVRVCIESISLQELYQSDYLLDLPAVQYLEGSTVSANSLTYELMKIFATEQLDSFLQFQQKNPNFLSTIGLSNDDCLQKIRLLSLATLTSEQSKVPYSLISKMLQIDENEVEMWVINAMEGDLLDAKLDQLNRIVNVNSSTQRVFNKSQWSQLGQRFSVWKSSVKNLLQVIENAKTTQVKPFYFQTR</sequence>
<proteinExistence type="evidence at protein level"/>
<accession>Q54KZ8</accession>
<name>EIF3M_DICDI</name>
<evidence type="ECO:0000255" key="1">
    <source>
        <dbReference type="HAMAP-Rule" id="MF_03012"/>
    </source>
</evidence>
<evidence type="ECO:0000255" key="2">
    <source>
        <dbReference type="PROSITE-ProRule" id="PRU01185"/>
    </source>
</evidence>
<keyword id="KW-0963">Cytoplasm</keyword>
<keyword id="KW-0903">Direct protein sequencing</keyword>
<keyword id="KW-0396">Initiation factor</keyword>
<keyword id="KW-0648">Protein biosynthesis</keyword>
<keyword id="KW-1185">Reference proteome</keyword>